<keyword id="KW-0131">Cell cycle</keyword>
<keyword id="KW-0132">Cell division</keyword>
<keyword id="KW-0342">GTP-binding</keyword>
<keyword id="KW-0460">Magnesium</keyword>
<keyword id="KW-0479">Metal-binding</keyword>
<keyword id="KW-0547">Nucleotide-binding</keyword>
<keyword id="KW-1185">Reference proteome</keyword>
<keyword id="KW-0717">Septation</keyword>
<proteinExistence type="inferred from homology"/>
<accession>Q11RJ8</accession>
<feature type="chain" id="PRO_0000266848" description="Probable GTP-binding protein EngB">
    <location>
        <begin position="1"/>
        <end position="199"/>
    </location>
</feature>
<feature type="domain" description="EngB-type G" evidence="1">
    <location>
        <begin position="21"/>
        <end position="196"/>
    </location>
</feature>
<feature type="binding site" evidence="1">
    <location>
        <begin position="29"/>
        <end position="36"/>
    </location>
    <ligand>
        <name>GTP</name>
        <dbReference type="ChEBI" id="CHEBI:37565"/>
    </ligand>
</feature>
<feature type="binding site" evidence="1">
    <location>
        <position position="36"/>
    </location>
    <ligand>
        <name>Mg(2+)</name>
        <dbReference type="ChEBI" id="CHEBI:18420"/>
    </ligand>
</feature>
<feature type="binding site" evidence="1">
    <location>
        <begin position="56"/>
        <end position="60"/>
    </location>
    <ligand>
        <name>GTP</name>
        <dbReference type="ChEBI" id="CHEBI:37565"/>
    </ligand>
</feature>
<feature type="binding site" evidence="1">
    <location>
        <position position="58"/>
    </location>
    <ligand>
        <name>Mg(2+)</name>
        <dbReference type="ChEBI" id="CHEBI:18420"/>
    </ligand>
</feature>
<feature type="binding site" evidence="1">
    <location>
        <begin position="74"/>
        <end position="77"/>
    </location>
    <ligand>
        <name>GTP</name>
        <dbReference type="ChEBI" id="CHEBI:37565"/>
    </ligand>
</feature>
<feature type="binding site" evidence="1">
    <location>
        <begin position="141"/>
        <end position="144"/>
    </location>
    <ligand>
        <name>GTP</name>
        <dbReference type="ChEBI" id="CHEBI:37565"/>
    </ligand>
</feature>
<feature type="binding site" evidence="1">
    <location>
        <begin position="175"/>
        <end position="177"/>
    </location>
    <ligand>
        <name>GTP</name>
        <dbReference type="ChEBI" id="CHEBI:37565"/>
    </ligand>
</feature>
<dbReference type="EMBL" id="CP000383">
    <property type="protein sequence ID" value="ABG59966.1"/>
    <property type="molecule type" value="Genomic_DNA"/>
</dbReference>
<dbReference type="RefSeq" id="WP_011586076.1">
    <property type="nucleotide sequence ID" value="NC_008255.1"/>
</dbReference>
<dbReference type="SMR" id="Q11RJ8"/>
<dbReference type="STRING" id="269798.CHU_2716"/>
<dbReference type="KEGG" id="chu:CHU_2716"/>
<dbReference type="eggNOG" id="COG0218">
    <property type="taxonomic scope" value="Bacteria"/>
</dbReference>
<dbReference type="HOGENOM" id="CLU_033732_3_1_10"/>
<dbReference type="OrthoDB" id="9804921at2"/>
<dbReference type="Proteomes" id="UP000001822">
    <property type="component" value="Chromosome"/>
</dbReference>
<dbReference type="GO" id="GO:0005525">
    <property type="term" value="F:GTP binding"/>
    <property type="evidence" value="ECO:0007669"/>
    <property type="project" value="UniProtKB-UniRule"/>
</dbReference>
<dbReference type="GO" id="GO:0046872">
    <property type="term" value="F:metal ion binding"/>
    <property type="evidence" value="ECO:0007669"/>
    <property type="project" value="UniProtKB-KW"/>
</dbReference>
<dbReference type="GO" id="GO:0000917">
    <property type="term" value="P:division septum assembly"/>
    <property type="evidence" value="ECO:0007669"/>
    <property type="project" value="UniProtKB-KW"/>
</dbReference>
<dbReference type="CDD" id="cd01876">
    <property type="entry name" value="YihA_EngB"/>
    <property type="match status" value="1"/>
</dbReference>
<dbReference type="FunFam" id="3.40.50.300:FF:000098">
    <property type="entry name" value="Probable GTP-binding protein EngB"/>
    <property type="match status" value="1"/>
</dbReference>
<dbReference type="Gene3D" id="3.40.50.300">
    <property type="entry name" value="P-loop containing nucleotide triphosphate hydrolases"/>
    <property type="match status" value="1"/>
</dbReference>
<dbReference type="HAMAP" id="MF_00321">
    <property type="entry name" value="GTPase_EngB"/>
    <property type="match status" value="1"/>
</dbReference>
<dbReference type="InterPro" id="IPR030393">
    <property type="entry name" value="G_ENGB_dom"/>
</dbReference>
<dbReference type="InterPro" id="IPR006073">
    <property type="entry name" value="GTP-bd"/>
</dbReference>
<dbReference type="InterPro" id="IPR019987">
    <property type="entry name" value="GTP-bd_ribosome_bio_YsxC"/>
</dbReference>
<dbReference type="InterPro" id="IPR027417">
    <property type="entry name" value="P-loop_NTPase"/>
</dbReference>
<dbReference type="NCBIfam" id="TIGR03598">
    <property type="entry name" value="GTPase_YsxC"/>
    <property type="match status" value="1"/>
</dbReference>
<dbReference type="PANTHER" id="PTHR11649:SF13">
    <property type="entry name" value="ENGB-TYPE G DOMAIN-CONTAINING PROTEIN"/>
    <property type="match status" value="1"/>
</dbReference>
<dbReference type="PANTHER" id="PTHR11649">
    <property type="entry name" value="MSS1/TRME-RELATED GTP-BINDING PROTEIN"/>
    <property type="match status" value="1"/>
</dbReference>
<dbReference type="Pfam" id="PF01926">
    <property type="entry name" value="MMR_HSR1"/>
    <property type="match status" value="1"/>
</dbReference>
<dbReference type="SUPFAM" id="SSF52540">
    <property type="entry name" value="P-loop containing nucleoside triphosphate hydrolases"/>
    <property type="match status" value="1"/>
</dbReference>
<dbReference type="PROSITE" id="PS51706">
    <property type="entry name" value="G_ENGB"/>
    <property type="match status" value="1"/>
</dbReference>
<organism>
    <name type="scientific">Cytophaga hutchinsonii (strain ATCC 33406 / DSM 1761 / CIP 103989 / NBRC 15051 / NCIMB 9469 / D465)</name>
    <dbReference type="NCBI Taxonomy" id="269798"/>
    <lineage>
        <taxon>Bacteria</taxon>
        <taxon>Pseudomonadati</taxon>
        <taxon>Bacteroidota</taxon>
        <taxon>Cytophagia</taxon>
        <taxon>Cytophagales</taxon>
        <taxon>Cytophagaceae</taxon>
        <taxon>Cytophaga</taxon>
    </lineage>
</organism>
<gene>
    <name evidence="1" type="primary">engB</name>
    <name type="ordered locus">CHU_2716</name>
</gene>
<protein>
    <recommendedName>
        <fullName evidence="1">Probable GTP-binding protein EngB</fullName>
    </recommendedName>
</protein>
<evidence type="ECO:0000255" key="1">
    <source>
        <dbReference type="HAMAP-Rule" id="MF_00321"/>
    </source>
</evidence>
<name>ENGB_CYTH3</name>
<comment type="function">
    <text evidence="1">Necessary for normal cell division and for the maintenance of normal septation.</text>
</comment>
<comment type="cofactor">
    <cofactor evidence="1">
        <name>Mg(2+)</name>
        <dbReference type="ChEBI" id="CHEBI:18420"/>
    </cofactor>
</comment>
<comment type="similarity">
    <text evidence="1">Belongs to the TRAFAC class TrmE-Era-EngA-EngB-Septin-like GTPase superfamily. EngB GTPase family.</text>
</comment>
<reference key="1">
    <citation type="journal article" date="2007" name="Appl. Environ. Microbiol.">
        <title>Genome sequence of the cellulolytic gliding bacterium Cytophaga hutchinsonii.</title>
        <authorList>
            <person name="Xie G."/>
            <person name="Bruce D.C."/>
            <person name="Challacombe J.F."/>
            <person name="Chertkov O."/>
            <person name="Detter J.C."/>
            <person name="Gilna P."/>
            <person name="Han C.S."/>
            <person name="Lucas S."/>
            <person name="Misra M."/>
            <person name="Myers G.L."/>
            <person name="Richardson P."/>
            <person name="Tapia R."/>
            <person name="Thayer N."/>
            <person name="Thompson L.S."/>
            <person name="Brettin T.S."/>
            <person name="Henrissat B."/>
            <person name="Wilson D.B."/>
            <person name="McBride M.J."/>
        </authorList>
    </citation>
    <scope>NUCLEOTIDE SEQUENCE [LARGE SCALE GENOMIC DNA]</scope>
    <source>
        <strain>ATCC 33406 / DSM 1761 / JCM 20678 / CIP 103989 / IAM 12607 / NBRC 15051 / NCIMB 9469 / D465</strain>
    </source>
</reference>
<sequence length="199" mass="22571">MKMNAKFISSYDDYQKCPEITKPEYAFIGRSNVGKSSLINSLTGVKNLAMTSSKPGKTQLINLFTIEETWILADLPGYGFAKASQSSRIKWGRMVHDYLKNRTNLTTVFLLVDSRHEPMKSDLEQITWLASNGIPFSLIFTKIDKQSLTQTNKILASWTKVLSENWEELPKMFLTSSESGKGTEELLTYIDEINKQIAN</sequence>